<reference key="1">
    <citation type="journal article" date="1992" name="Gene">
        <title>Isolation and complete sequence of the purL gene encoding FGAM synthase II in Lactobacillus casei.</title>
        <authorList>
            <person name="Gu Z.-M."/>
            <person name="Martindale D.W."/>
            <person name="Lee B.H."/>
        </authorList>
    </citation>
    <scope>NUCLEOTIDE SEQUENCE [GENOMIC DNA]</scope>
</reference>
<reference key="2">
    <citation type="journal article" date="1993" name="Gene">
        <authorList>
            <person name="Gu Z.-M."/>
            <person name="Martindale D.W."/>
            <person name="Lee B.H."/>
        </authorList>
    </citation>
    <scope>ERRATUM OF PUBMED:1398079</scope>
</reference>
<feature type="propeptide" id="PRO_0000029253" evidence="1">
    <location>
        <begin position="1"/>
        <end position="11"/>
    </location>
</feature>
<feature type="chain" id="PRO_0000029254" description="Amidophosphoribosyltransferase">
    <location>
        <begin position="12"/>
        <end position="194" status="greater than"/>
    </location>
</feature>
<feature type="domain" description="Glutamine amidotransferase type-2" evidence="2">
    <location>
        <begin position="12"/>
        <end position="194" status="greater than"/>
    </location>
</feature>
<feature type="active site" description="Nucleophile" evidence="2">
    <location>
        <position position="12"/>
    </location>
</feature>
<feature type="non-terminal residue">
    <location>
        <position position="194"/>
    </location>
</feature>
<sequence length="194" mass="21144">MPHEPKGLNEECGVFGVWGNPNAASITHLGLHTLQHRGQEGAGIVGLTKDGMRRHYGLGLLSEVFTNTDQLTPLIGRAALGHVRYSTAGGRVLENIQPLLFRFSDEAIALAHNGNLTNAISLRRQLEDQGAIFQSTSDTEVLMHLIRRQVGQPWLTQLKTALNEVHGGFAFVLLTEHGLYAAVDPHGFRPMVVG</sequence>
<name>PUR1_LACCA</name>
<organism>
    <name type="scientific">Lacticaseibacillus casei</name>
    <name type="common">Lactobacillus casei</name>
    <dbReference type="NCBI Taxonomy" id="1582"/>
    <lineage>
        <taxon>Bacteria</taxon>
        <taxon>Bacillati</taxon>
        <taxon>Bacillota</taxon>
        <taxon>Bacilli</taxon>
        <taxon>Lactobacillales</taxon>
        <taxon>Lactobacillaceae</taxon>
        <taxon>Lacticaseibacillus</taxon>
    </lineage>
</organism>
<accession>P35853</accession>
<comment type="function">
    <text evidence="2">Catalyzes the formation of phosphoribosylamine from phosphoribosylpyrophosphate (PRPP) and glutamine.</text>
</comment>
<comment type="catalytic activity">
    <reaction evidence="2">
        <text>5-phospho-beta-D-ribosylamine + L-glutamate + diphosphate = 5-phospho-alpha-D-ribose 1-diphosphate + L-glutamine + H2O</text>
        <dbReference type="Rhea" id="RHEA:14905"/>
        <dbReference type="ChEBI" id="CHEBI:15377"/>
        <dbReference type="ChEBI" id="CHEBI:29985"/>
        <dbReference type="ChEBI" id="CHEBI:33019"/>
        <dbReference type="ChEBI" id="CHEBI:58017"/>
        <dbReference type="ChEBI" id="CHEBI:58359"/>
        <dbReference type="ChEBI" id="CHEBI:58681"/>
        <dbReference type="EC" id="2.4.2.14"/>
    </reaction>
</comment>
<comment type="pathway">
    <text evidence="2">Purine metabolism; IMP biosynthesis via de novo pathway; N(1)-(5-phospho-D-ribosyl)glycinamide from 5-phospho-alpha-D-ribose 1-diphosphate: step 1/2.</text>
</comment>
<comment type="similarity">
    <text evidence="2">In the C-terminal section; belongs to the purine/pyrimidine phosphoribosyltransferase family.</text>
</comment>
<keyword id="KW-0315">Glutamine amidotransferase</keyword>
<keyword id="KW-0328">Glycosyltransferase</keyword>
<keyword id="KW-0658">Purine biosynthesis</keyword>
<keyword id="KW-0808">Transferase</keyword>
<gene>
    <name evidence="2" type="primary">purF</name>
</gene>
<dbReference type="EC" id="2.4.2.14" evidence="2"/>
<dbReference type="EMBL" id="M85265">
    <property type="protein sequence ID" value="AAC36948.1"/>
    <property type="molecule type" value="Genomic_DNA"/>
</dbReference>
<dbReference type="PIR" id="PC1136">
    <property type="entry name" value="PC1136"/>
</dbReference>
<dbReference type="SMR" id="P35853"/>
<dbReference type="STRING" id="1582.AAW28_12365"/>
<dbReference type="MEROPS" id="C44.001"/>
<dbReference type="eggNOG" id="COG0034">
    <property type="taxonomic scope" value="Bacteria"/>
</dbReference>
<dbReference type="UniPathway" id="UPA00074">
    <property type="reaction ID" value="UER00124"/>
</dbReference>
<dbReference type="GO" id="GO:0004044">
    <property type="term" value="F:amidophosphoribosyltransferase activity"/>
    <property type="evidence" value="ECO:0007669"/>
    <property type="project" value="UniProtKB-EC"/>
</dbReference>
<dbReference type="GO" id="GO:0006189">
    <property type="term" value="P:'de novo' IMP biosynthetic process"/>
    <property type="evidence" value="ECO:0007669"/>
    <property type="project" value="UniProtKB-UniPathway"/>
</dbReference>
<dbReference type="Gene3D" id="3.60.20.10">
    <property type="entry name" value="Glutamine Phosphoribosylpyrophosphate, subunit 1, domain 1"/>
    <property type="match status" value="1"/>
</dbReference>
<dbReference type="InterPro" id="IPR017932">
    <property type="entry name" value="GATase_2_dom"/>
</dbReference>
<dbReference type="InterPro" id="IPR029055">
    <property type="entry name" value="Ntn_hydrolases_N"/>
</dbReference>
<dbReference type="PANTHER" id="PTHR11907">
    <property type="entry name" value="AMIDOPHOSPHORIBOSYLTRANSFERASE"/>
    <property type="match status" value="1"/>
</dbReference>
<dbReference type="Pfam" id="PF13522">
    <property type="entry name" value="GATase_6"/>
    <property type="match status" value="1"/>
</dbReference>
<dbReference type="SUPFAM" id="SSF56235">
    <property type="entry name" value="N-terminal nucleophile aminohydrolases (Ntn hydrolases)"/>
    <property type="match status" value="1"/>
</dbReference>
<dbReference type="PROSITE" id="PS51278">
    <property type="entry name" value="GATASE_TYPE_2"/>
    <property type="match status" value="1"/>
</dbReference>
<protein>
    <recommendedName>
        <fullName evidence="2">Amidophosphoribosyltransferase</fullName>
        <shortName evidence="2">ATase</shortName>
        <ecNumber evidence="2">2.4.2.14</ecNumber>
    </recommendedName>
    <alternativeName>
        <fullName evidence="2">Glutamine phosphoribosylpyrophosphate amidotransferase</fullName>
        <shortName evidence="2">GPATase</shortName>
    </alternativeName>
</protein>
<evidence type="ECO:0000250" key="1"/>
<evidence type="ECO:0000255" key="2">
    <source>
        <dbReference type="HAMAP-Rule" id="MF_01931"/>
    </source>
</evidence>
<proteinExistence type="inferred from homology"/>